<name>PDXH_SHEB8</name>
<organism>
    <name type="scientific">Shewanella baltica (strain OS185)</name>
    <dbReference type="NCBI Taxonomy" id="402882"/>
    <lineage>
        <taxon>Bacteria</taxon>
        <taxon>Pseudomonadati</taxon>
        <taxon>Pseudomonadota</taxon>
        <taxon>Gammaproteobacteria</taxon>
        <taxon>Alteromonadales</taxon>
        <taxon>Shewanellaceae</taxon>
        <taxon>Shewanella</taxon>
    </lineage>
</organism>
<proteinExistence type="inferred from homology"/>
<protein>
    <recommendedName>
        <fullName evidence="1">Pyridoxine/pyridoxamine 5'-phosphate oxidase</fullName>
        <ecNumber evidence="1">1.4.3.5</ecNumber>
    </recommendedName>
    <alternativeName>
        <fullName evidence="1">PNP/PMP oxidase</fullName>
        <shortName evidence="1">PNPOx</shortName>
    </alternativeName>
    <alternativeName>
        <fullName evidence="1">Pyridoxal 5'-phosphate synthase</fullName>
    </alternativeName>
</protein>
<evidence type="ECO:0000255" key="1">
    <source>
        <dbReference type="HAMAP-Rule" id="MF_01629"/>
    </source>
</evidence>
<accession>A6WM67</accession>
<feature type="chain" id="PRO_0000335798" description="Pyridoxine/pyridoxamine 5'-phosphate oxidase">
    <location>
        <begin position="1"/>
        <end position="212"/>
    </location>
</feature>
<feature type="binding site" evidence="1">
    <location>
        <begin position="8"/>
        <end position="11"/>
    </location>
    <ligand>
        <name>substrate</name>
    </ligand>
</feature>
<feature type="binding site" evidence="1">
    <location>
        <begin position="61"/>
        <end position="66"/>
    </location>
    <ligand>
        <name>FMN</name>
        <dbReference type="ChEBI" id="CHEBI:58210"/>
    </ligand>
</feature>
<feature type="binding site" evidence="1">
    <location>
        <position position="66"/>
    </location>
    <ligand>
        <name>substrate</name>
    </ligand>
</feature>
<feature type="binding site" evidence="1">
    <location>
        <begin position="76"/>
        <end position="77"/>
    </location>
    <ligand>
        <name>FMN</name>
        <dbReference type="ChEBI" id="CHEBI:58210"/>
    </ligand>
</feature>
<feature type="binding site" evidence="1">
    <location>
        <position position="82"/>
    </location>
    <ligand>
        <name>FMN</name>
        <dbReference type="ChEBI" id="CHEBI:58210"/>
    </ligand>
</feature>
<feature type="binding site" evidence="1">
    <location>
        <position position="83"/>
    </location>
    <ligand>
        <name>FMN</name>
        <dbReference type="ChEBI" id="CHEBI:58210"/>
    </ligand>
</feature>
<feature type="binding site" evidence="1">
    <location>
        <position position="105"/>
    </location>
    <ligand>
        <name>FMN</name>
        <dbReference type="ChEBI" id="CHEBI:58210"/>
    </ligand>
</feature>
<feature type="binding site" evidence="1">
    <location>
        <position position="123"/>
    </location>
    <ligand>
        <name>substrate</name>
    </ligand>
</feature>
<feature type="binding site" evidence="1">
    <location>
        <position position="127"/>
    </location>
    <ligand>
        <name>substrate</name>
    </ligand>
</feature>
<feature type="binding site" evidence="1">
    <location>
        <position position="131"/>
    </location>
    <ligand>
        <name>substrate</name>
    </ligand>
</feature>
<feature type="binding site" evidence="1">
    <location>
        <begin position="140"/>
        <end position="141"/>
    </location>
    <ligand>
        <name>FMN</name>
        <dbReference type="ChEBI" id="CHEBI:58210"/>
    </ligand>
</feature>
<feature type="binding site" evidence="1">
    <location>
        <position position="185"/>
    </location>
    <ligand>
        <name>FMN</name>
        <dbReference type="ChEBI" id="CHEBI:58210"/>
    </ligand>
</feature>
<feature type="binding site" evidence="1">
    <location>
        <begin position="191"/>
        <end position="193"/>
    </location>
    <ligand>
        <name>substrate</name>
    </ligand>
</feature>
<feature type="binding site" evidence="1">
    <location>
        <position position="195"/>
    </location>
    <ligand>
        <name>FMN</name>
        <dbReference type="ChEBI" id="CHEBI:58210"/>
    </ligand>
</feature>
<keyword id="KW-0285">Flavoprotein</keyword>
<keyword id="KW-0288">FMN</keyword>
<keyword id="KW-0560">Oxidoreductase</keyword>
<keyword id="KW-0664">Pyridoxine biosynthesis</keyword>
<reference key="1">
    <citation type="submission" date="2007-07" db="EMBL/GenBank/DDBJ databases">
        <title>Complete sequence of chromosome of Shewanella baltica OS185.</title>
        <authorList>
            <consortium name="US DOE Joint Genome Institute"/>
            <person name="Copeland A."/>
            <person name="Lucas S."/>
            <person name="Lapidus A."/>
            <person name="Barry K."/>
            <person name="Glavina del Rio T."/>
            <person name="Dalin E."/>
            <person name="Tice H."/>
            <person name="Pitluck S."/>
            <person name="Sims D."/>
            <person name="Brettin T."/>
            <person name="Bruce D."/>
            <person name="Detter J.C."/>
            <person name="Han C."/>
            <person name="Schmutz J."/>
            <person name="Larimer F."/>
            <person name="Land M."/>
            <person name="Hauser L."/>
            <person name="Kyrpides N."/>
            <person name="Mikhailova N."/>
            <person name="Brettar I."/>
            <person name="Rodrigues J."/>
            <person name="Konstantinidis K."/>
            <person name="Tiedje J."/>
            <person name="Richardson P."/>
        </authorList>
    </citation>
    <scope>NUCLEOTIDE SEQUENCE [LARGE SCALE GENOMIC DNA]</scope>
    <source>
        <strain>OS185</strain>
    </source>
</reference>
<dbReference type="EC" id="1.4.3.5" evidence="1"/>
<dbReference type="EMBL" id="CP000753">
    <property type="protein sequence ID" value="ABS07906.1"/>
    <property type="molecule type" value="Genomic_DNA"/>
</dbReference>
<dbReference type="RefSeq" id="WP_006081276.1">
    <property type="nucleotide sequence ID" value="NC_009665.1"/>
</dbReference>
<dbReference type="SMR" id="A6WM67"/>
<dbReference type="GeneID" id="11772029"/>
<dbReference type="KEGG" id="sbm:Shew185_1763"/>
<dbReference type="HOGENOM" id="CLU_032263_2_2_6"/>
<dbReference type="UniPathway" id="UPA01068">
    <property type="reaction ID" value="UER00304"/>
</dbReference>
<dbReference type="UniPathway" id="UPA01068">
    <property type="reaction ID" value="UER00305"/>
</dbReference>
<dbReference type="GO" id="GO:0010181">
    <property type="term" value="F:FMN binding"/>
    <property type="evidence" value="ECO:0007669"/>
    <property type="project" value="UniProtKB-UniRule"/>
</dbReference>
<dbReference type="GO" id="GO:0004733">
    <property type="term" value="F:pyridoxamine phosphate oxidase activity"/>
    <property type="evidence" value="ECO:0007669"/>
    <property type="project" value="UniProtKB-UniRule"/>
</dbReference>
<dbReference type="GO" id="GO:0008615">
    <property type="term" value="P:pyridoxine biosynthetic process"/>
    <property type="evidence" value="ECO:0007669"/>
    <property type="project" value="UniProtKB-KW"/>
</dbReference>
<dbReference type="FunFam" id="2.30.110.10:FF:000001">
    <property type="entry name" value="Pyridoxine/pyridoxamine 5'-phosphate oxidase"/>
    <property type="match status" value="1"/>
</dbReference>
<dbReference type="Gene3D" id="2.30.110.10">
    <property type="entry name" value="Electron Transport, Fmn-binding Protein, Chain A"/>
    <property type="match status" value="1"/>
</dbReference>
<dbReference type="HAMAP" id="MF_01629">
    <property type="entry name" value="PdxH"/>
    <property type="match status" value="1"/>
</dbReference>
<dbReference type="InterPro" id="IPR000659">
    <property type="entry name" value="Pyridox_Oxase"/>
</dbReference>
<dbReference type="InterPro" id="IPR019740">
    <property type="entry name" value="Pyridox_Oxase_CS"/>
</dbReference>
<dbReference type="InterPro" id="IPR011576">
    <property type="entry name" value="Pyridox_Oxase_N"/>
</dbReference>
<dbReference type="InterPro" id="IPR019576">
    <property type="entry name" value="Pyridoxamine_oxidase_dimer_C"/>
</dbReference>
<dbReference type="InterPro" id="IPR012349">
    <property type="entry name" value="Split_barrel_FMN-bd"/>
</dbReference>
<dbReference type="NCBIfam" id="TIGR00558">
    <property type="entry name" value="pdxH"/>
    <property type="match status" value="1"/>
</dbReference>
<dbReference type="NCBIfam" id="NF004231">
    <property type="entry name" value="PRK05679.1"/>
    <property type="match status" value="1"/>
</dbReference>
<dbReference type="PANTHER" id="PTHR10851:SF0">
    <property type="entry name" value="PYRIDOXINE-5'-PHOSPHATE OXIDASE"/>
    <property type="match status" value="1"/>
</dbReference>
<dbReference type="PANTHER" id="PTHR10851">
    <property type="entry name" value="PYRIDOXINE-5-PHOSPHATE OXIDASE"/>
    <property type="match status" value="1"/>
</dbReference>
<dbReference type="Pfam" id="PF10590">
    <property type="entry name" value="PNP_phzG_C"/>
    <property type="match status" value="1"/>
</dbReference>
<dbReference type="Pfam" id="PF01243">
    <property type="entry name" value="PNPOx_N"/>
    <property type="match status" value="1"/>
</dbReference>
<dbReference type="PIRSF" id="PIRSF000190">
    <property type="entry name" value="Pyd_amn-ph_oxd"/>
    <property type="match status" value="1"/>
</dbReference>
<dbReference type="SUPFAM" id="SSF50475">
    <property type="entry name" value="FMN-binding split barrel"/>
    <property type="match status" value="1"/>
</dbReference>
<dbReference type="PROSITE" id="PS01064">
    <property type="entry name" value="PYRIDOX_OXIDASE"/>
    <property type="match status" value="1"/>
</dbReference>
<comment type="function">
    <text evidence="1">Catalyzes the oxidation of either pyridoxine 5'-phosphate (PNP) or pyridoxamine 5'-phosphate (PMP) into pyridoxal 5'-phosphate (PLP).</text>
</comment>
<comment type="catalytic activity">
    <reaction evidence="1">
        <text>pyridoxamine 5'-phosphate + O2 + H2O = pyridoxal 5'-phosphate + H2O2 + NH4(+)</text>
        <dbReference type="Rhea" id="RHEA:15817"/>
        <dbReference type="ChEBI" id="CHEBI:15377"/>
        <dbReference type="ChEBI" id="CHEBI:15379"/>
        <dbReference type="ChEBI" id="CHEBI:16240"/>
        <dbReference type="ChEBI" id="CHEBI:28938"/>
        <dbReference type="ChEBI" id="CHEBI:58451"/>
        <dbReference type="ChEBI" id="CHEBI:597326"/>
        <dbReference type="EC" id="1.4.3.5"/>
    </reaction>
</comment>
<comment type="catalytic activity">
    <reaction evidence="1">
        <text>pyridoxine 5'-phosphate + O2 = pyridoxal 5'-phosphate + H2O2</text>
        <dbReference type="Rhea" id="RHEA:15149"/>
        <dbReference type="ChEBI" id="CHEBI:15379"/>
        <dbReference type="ChEBI" id="CHEBI:16240"/>
        <dbReference type="ChEBI" id="CHEBI:58589"/>
        <dbReference type="ChEBI" id="CHEBI:597326"/>
        <dbReference type="EC" id="1.4.3.5"/>
    </reaction>
</comment>
<comment type="cofactor">
    <cofactor evidence="1">
        <name>FMN</name>
        <dbReference type="ChEBI" id="CHEBI:58210"/>
    </cofactor>
    <text evidence="1">Binds 1 FMN per subunit.</text>
</comment>
<comment type="pathway">
    <text evidence="1">Cofactor metabolism; pyridoxal 5'-phosphate salvage; pyridoxal 5'-phosphate from pyridoxamine 5'-phosphate: step 1/1.</text>
</comment>
<comment type="pathway">
    <text evidence="1">Cofactor metabolism; pyridoxal 5'-phosphate salvage; pyridoxal 5'-phosphate from pyridoxine 5'-phosphate: step 1/1.</text>
</comment>
<comment type="subunit">
    <text evidence="1">Homodimer.</text>
</comment>
<comment type="similarity">
    <text evidence="1">Belongs to the pyridoxamine 5'-phosphate oxidase family.</text>
</comment>
<gene>
    <name evidence="1" type="primary">pdxH</name>
    <name type="ordered locus">Shew185_1763</name>
</gene>
<sequence length="212" mass="24360">MTDLSDIRREYAKGGLRRADLPQNPMDLFELWMTQARDAELSDPTAMCVATVDEHGQPFQRIVLLKRFDDTGFVFFTNLGSRKAQQIAANNKVSLHFPWHPLERQVSVLGEAQALSTAEVLKYFMTRPKDSQIAAWVSQQSSKLSARQVLEGKFFEMKAKFAKGDVPLPSFWGGYLVRPSSIEFWQGGEHRLHDRFIYTRHDAEWEIDRLAP</sequence>